<reference key="1">
    <citation type="journal article" date="2004" name="PLoS Biol.">
        <title>Genomic insights into methanotrophy: the complete genome sequence of Methylococcus capsulatus (Bath).</title>
        <authorList>
            <person name="Ward N.L."/>
            <person name="Larsen O."/>
            <person name="Sakwa J."/>
            <person name="Bruseth L."/>
            <person name="Khouri H.M."/>
            <person name="Durkin A.S."/>
            <person name="Dimitrov G."/>
            <person name="Jiang L."/>
            <person name="Scanlan D."/>
            <person name="Kang K.H."/>
            <person name="Lewis M.R."/>
            <person name="Nelson K.E."/>
            <person name="Methe B.A."/>
            <person name="Wu M."/>
            <person name="Heidelberg J.F."/>
            <person name="Paulsen I.T."/>
            <person name="Fouts D.E."/>
            <person name="Ravel J."/>
            <person name="Tettelin H."/>
            <person name="Ren Q."/>
            <person name="Read T.D."/>
            <person name="DeBoy R.T."/>
            <person name="Seshadri R."/>
            <person name="Salzberg S.L."/>
            <person name="Jensen H.B."/>
            <person name="Birkeland N.K."/>
            <person name="Nelson W.C."/>
            <person name="Dodson R.J."/>
            <person name="Grindhaug S.H."/>
            <person name="Holt I.E."/>
            <person name="Eidhammer I."/>
            <person name="Jonasen I."/>
            <person name="Vanaken S."/>
            <person name="Utterback T.R."/>
            <person name="Feldblyum T.V."/>
            <person name="Fraser C.M."/>
            <person name="Lillehaug J.R."/>
            <person name="Eisen J.A."/>
        </authorList>
    </citation>
    <scope>NUCLEOTIDE SEQUENCE [LARGE SCALE GENOMIC DNA]</scope>
    <source>
        <strain>ATCC 33009 / NCIMB 11132 / Bath</strain>
    </source>
</reference>
<keyword id="KW-0067">ATP-binding</keyword>
<keyword id="KW-0119">Carbohydrate metabolism</keyword>
<keyword id="KW-0320">Glycogen biosynthesis</keyword>
<keyword id="KW-0321">Glycogen metabolism</keyword>
<keyword id="KW-0547">Nucleotide-binding</keyword>
<keyword id="KW-0548">Nucleotidyltransferase</keyword>
<keyword id="KW-1185">Reference proteome</keyword>
<keyword id="KW-0808">Transferase</keyword>
<evidence type="ECO:0000255" key="1">
    <source>
        <dbReference type="HAMAP-Rule" id="MF_00624"/>
    </source>
</evidence>
<proteinExistence type="inferred from homology"/>
<accession>Q608L6</accession>
<gene>
    <name evidence="1" type="primary">glgC</name>
    <name type="ordered locus">MCA1474</name>
</gene>
<feature type="chain" id="PRO_0000195305" description="Glucose-1-phosphate adenylyltransferase">
    <location>
        <begin position="1"/>
        <end position="424"/>
    </location>
</feature>
<feature type="binding site" evidence="1">
    <location>
        <position position="112"/>
    </location>
    <ligand>
        <name>alpha-D-glucose 1-phosphate</name>
        <dbReference type="ChEBI" id="CHEBI:58601"/>
    </ligand>
</feature>
<feature type="binding site" evidence="1">
    <location>
        <position position="177"/>
    </location>
    <ligand>
        <name>alpha-D-glucose 1-phosphate</name>
        <dbReference type="ChEBI" id="CHEBI:58601"/>
    </ligand>
</feature>
<feature type="binding site" evidence="1">
    <location>
        <begin position="192"/>
        <end position="193"/>
    </location>
    <ligand>
        <name>alpha-D-glucose 1-phosphate</name>
        <dbReference type="ChEBI" id="CHEBI:58601"/>
    </ligand>
</feature>
<feature type="binding site" evidence="1">
    <location>
        <position position="210"/>
    </location>
    <ligand>
        <name>alpha-D-glucose 1-phosphate</name>
        <dbReference type="ChEBI" id="CHEBI:58601"/>
    </ligand>
</feature>
<dbReference type="EC" id="2.7.7.27" evidence="1"/>
<dbReference type="EMBL" id="AE017282">
    <property type="protein sequence ID" value="AAU92510.1"/>
    <property type="molecule type" value="Genomic_DNA"/>
</dbReference>
<dbReference type="RefSeq" id="WP_010960750.1">
    <property type="nucleotide sequence ID" value="NC_002977.6"/>
</dbReference>
<dbReference type="SMR" id="Q608L6"/>
<dbReference type="STRING" id="243233.MCA1474"/>
<dbReference type="GeneID" id="88223747"/>
<dbReference type="KEGG" id="mca:MCA1474"/>
<dbReference type="eggNOG" id="COG0448">
    <property type="taxonomic scope" value="Bacteria"/>
</dbReference>
<dbReference type="HOGENOM" id="CLU_029499_14_1_6"/>
<dbReference type="UniPathway" id="UPA00164"/>
<dbReference type="Proteomes" id="UP000006821">
    <property type="component" value="Chromosome"/>
</dbReference>
<dbReference type="GO" id="GO:0005524">
    <property type="term" value="F:ATP binding"/>
    <property type="evidence" value="ECO:0007669"/>
    <property type="project" value="UniProtKB-KW"/>
</dbReference>
<dbReference type="GO" id="GO:0008878">
    <property type="term" value="F:glucose-1-phosphate adenylyltransferase activity"/>
    <property type="evidence" value="ECO:0007669"/>
    <property type="project" value="UniProtKB-UniRule"/>
</dbReference>
<dbReference type="GO" id="GO:0005978">
    <property type="term" value="P:glycogen biosynthetic process"/>
    <property type="evidence" value="ECO:0007669"/>
    <property type="project" value="UniProtKB-UniRule"/>
</dbReference>
<dbReference type="CDD" id="cd02508">
    <property type="entry name" value="ADP_Glucose_PP"/>
    <property type="match status" value="1"/>
</dbReference>
<dbReference type="CDD" id="cd04651">
    <property type="entry name" value="LbH_G1P_AT_C"/>
    <property type="match status" value="1"/>
</dbReference>
<dbReference type="Gene3D" id="2.160.10.10">
    <property type="entry name" value="Hexapeptide repeat proteins"/>
    <property type="match status" value="1"/>
</dbReference>
<dbReference type="Gene3D" id="3.90.550.10">
    <property type="entry name" value="Spore Coat Polysaccharide Biosynthesis Protein SpsA, Chain A"/>
    <property type="match status" value="1"/>
</dbReference>
<dbReference type="HAMAP" id="MF_00624">
    <property type="entry name" value="GlgC"/>
    <property type="match status" value="1"/>
</dbReference>
<dbReference type="InterPro" id="IPR011831">
    <property type="entry name" value="ADP-Glc_PPase"/>
</dbReference>
<dbReference type="InterPro" id="IPR005836">
    <property type="entry name" value="ADP_Glu_pyroP_CS"/>
</dbReference>
<dbReference type="InterPro" id="IPR023049">
    <property type="entry name" value="GlgC_bac"/>
</dbReference>
<dbReference type="InterPro" id="IPR056818">
    <property type="entry name" value="GlmU/GlgC-like_hexapep"/>
</dbReference>
<dbReference type="InterPro" id="IPR005835">
    <property type="entry name" value="NTP_transferase_dom"/>
</dbReference>
<dbReference type="InterPro" id="IPR029044">
    <property type="entry name" value="Nucleotide-diphossugar_trans"/>
</dbReference>
<dbReference type="InterPro" id="IPR011004">
    <property type="entry name" value="Trimer_LpxA-like_sf"/>
</dbReference>
<dbReference type="NCBIfam" id="TIGR02091">
    <property type="entry name" value="glgC"/>
    <property type="match status" value="1"/>
</dbReference>
<dbReference type="NCBIfam" id="NF001947">
    <property type="entry name" value="PRK00725.1"/>
    <property type="match status" value="1"/>
</dbReference>
<dbReference type="NCBIfam" id="NF002023">
    <property type="entry name" value="PRK00844.1"/>
    <property type="match status" value="1"/>
</dbReference>
<dbReference type="PANTHER" id="PTHR43523:SF2">
    <property type="entry name" value="GLUCOSE-1-PHOSPHATE ADENYLYLTRANSFERASE"/>
    <property type="match status" value="1"/>
</dbReference>
<dbReference type="PANTHER" id="PTHR43523">
    <property type="entry name" value="GLUCOSE-1-PHOSPHATE ADENYLYLTRANSFERASE-RELATED"/>
    <property type="match status" value="1"/>
</dbReference>
<dbReference type="Pfam" id="PF24894">
    <property type="entry name" value="Hexapep_GlmU"/>
    <property type="match status" value="1"/>
</dbReference>
<dbReference type="Pfam" id="PF00483">
    <property type="entry name" value="NTP_transferase"/>
    <property type="match status" value="1"/>
</dbReference>
<dbReference type="SUPFAM" id="SSF53448">
    <property type="entry name" value="Nucleotide-diphospho-sugar transferases"/>
    <property type="match status" value="1"/>
</dbReference>
<dbReference type="SUPFAM" id="SSF51161">
    <property type="entry name" value="Trimeric LpxA-like enzymes"/>
    <property type="match status" value="1"/>
</dbReference>
<dbReference type="PROSITE" id="PS00808">
    <property type="entry name" value="ADP_GLC_PYROPHOSPH_1"/>
    <property type="match status" value="1"/>
</dbReference>
<dbReference type="PROSITE" id="PS00809">
    <property type="entry name" value="ADP_GLC_PYROPHOSPH_2"/>
    <property type="match status" value="1"/>
</dbReference>
<sequence>MPESMHASSRFVSRLTRQTLALILAGGRGSRLQKLTEWRAKPAVPFGGKFRIIDFPLSNCVNSGIRQVGVLTQYKADSLIRHIQQGWGFLRGELGEFIDIMPAQQRLQESWYAGTADAVYQNLDIIRQRDPEFIMILAGDHVYKMDYGLMLAYHVERKADLTIGCMEVPLADAKAFGVMQMDGEQRIRKFVEKPSDPPPMPNRPDHAAASMGIYIFNTAFLFEQLIKDADTPGSNHDFGMDIIPQVIQKYRVFAYRFRNAQSGVQAYWRDVGTVDSYWAANMELIGVDPELNLYDQEWPIWTYQAQTPPAKFVFDDDDRRGMAVDSMVSGGCIISGAEVRHSLLFSNVRVNSFSRVLDSVILPDVNIGRHCRISRAVIDKGCNIPPNTVIGENLEDDRKRFYVSPEGIVLVTPDCLGQRLHFHR</sequence>
<name>GLGC_METCA</name>
<protein>
    <recommendedName>
        <fullName evidence="1">Glucose-1-phosphate adenylyltransferase</fullName>
        <ecNumber evidence="1">2.7.7.27</ecNumber>
    </recommendedName>
    <alternativeName>
        <fullName evidence="1">ADP-glucose pyrophosphorylase</fullName>
        <shortName evidence="1">ADPGlc PPase</shortName>
    </alternativeName>
    <alternativeName>
        <fullName evidence="1">ADP-glucose synthase</fullName>
    </alternativeName>
</protein>
<comment type="function">
    <text evidence="1">Involved in the biosynthesis of ADP-glucose, a building block required for the elongation reactions to produce glycogen. Catalyzes the reaction between ATP and alpha-D-glucose 1-phosphate (G1P) to produce pyrophosphate and ADP-Glc.</text>
</comment>
<comment type="catalytic activity">
    <reaction evidence="1">
        <text>alpha-D-glucose 1-phosphate + ATP + H(+) = ADP-alpha-D-glucose + diphosphate</text>
        <dbReference type="Rhea" id="RHEA:12120"/>
        <dbReference type="ChEBI" id="CHEBI:15378"/>
        <dbReference type="ChEBI" id="CHEBI:30616"/>
        <dbReference type="ChEBI" id="CHEBI:33019"/>
        <dbReference type="ChEBI" id="CHEBI:57498"/>
        <dbReference type="ChEBI" id="CHEBI:58601"/>
        <dbReference type="EC" id="2.7.7.27"/>
    </reaction>
</comment>
<comment type="pathway">
    <text evidence="1">Glycan biosynthesis; glycogen biosynthesis.</text>
</comment>
<comment type="subunit">
    <text evidence="1">Homotetramer.</text>
</comment>
<comment type="similarity">
    <text evidence="1">Belongs to the bacterial/plant glucose-1-phosphate adenylyltransferase family.</text>
</comment>
<organism>
    <name type="scientific">Methylococcus capsulatus (strain ATCC 33009 / NCIMB 11132 / Bath)</name>
    <dbReference type="NCBI Taxonomy" id="243233"/>
    <lineage>
        <taxon>Bacteria</taxon>
        <taxon>Pseudomonadati</taxon>
        <taxon>Pseudomonadota</taxon>
        <taxon>Gammaproteobacteria</taxon>
        <taxon>Methylococcales</taxon>
        <taxon>Methylococcaceae</taxon>
        <taxon>Methylococcus</taxon>
    </lineage>
</organism>